<keyword id="KW-0186">Copper</keyword>
<keyword id="KW-0249">Electron transport</keyword>
<keyword id="KW-0460">Magnesium</keyword>
<keyword id="KW-0472">Membrane</keyword>
<keyword id="KW-0479">Metal-binding</keyword>
<keyword id="KW-0496">Mitochondrion</keyword>
<keyword id="KW-0999">Mitochondrion inner membrane</keyword>
<keyword id="KW-0597">Phosphoprotein</keyword>
<keyword id="KW-0679">Respiratory chain</keyword>
<keyword id="KW-1278">Translocase</keyword>
<keyword id="KW-0812">Transmembrane</keyword>
<keyword id="KW-1133">Transmembrane helix</keyword>
<keyword id="KW-0813">Transport</keyword>
<sequence>MAYPFQLGLQDATSPIMEELTNFHDHTLMIVFLISTLVLYIISLMLTTKLTHTSTMDAQEVETIWTILPAVILILIALPSLRILYMMDEINNPVLTVKTMGHQWYWSYEYTDYEDLNFDSYMIPTSDLKPGELRLLEVDNRVVLPMELPIRMLISSEDVLHSWAVPSLGLKTDAIPGRLNQATVTSNRPGLFYGQCSEICGSNHSFMPIVLEMVPLKYFENWSASMI</sequence>
<name>COX2_LEOSA</name>
<organism>
    <name type="scientific">Leopoldamys sabanus</name>
    <name type="common">Long-tailed giant rat</name>
    <dbReference type="NCBI Taxonomy" id="69073"/>
    <lineage>
        <taxon>Eukaryota</taxon>
        <taxon>Metazoa</taxon>
        <taxon>Chordata</taxon>
        <taxon>Craniata</taxon>
        <taxon>Vertebrata</taxon>
        <taxon>Euteleostomi</taxon>
        <taxon>Mammalia</taxon>
        <taxon>Eutheria</taxon>
        <taxon>Euarchontoglires</taxon>
        <taxon>Glires</taxon>
        <taxon>Rodentia</taxon>
        <taxon>Myomorpha</taxon>
        <taxon>Muroidea</taxon>
        <taxon>Muridae</taxon>
        <taxon>Murinae</taxon>
        <taxon>Leopoldamys</taxon>
    </lineage>
</organism>
<gene>
    <name type="primary">MT-CO2</name>
    <name type="synonym">COII</name>
    <name type="synonym">COX2</name>
    <name type="synonym">COXII</name>
    <name type="synonym">MTCO2</name>
</gene>
<accession>Q38S00</accession>
<evidence type="ECO:0000250" key="1">
    <source>
        <dbReference type="UniProtKB" id="P00403"/>
    </source>
</evidence>
<evidence type="ECO:0000250" key="2">
    <source>
        <dbReference type="UniProtKB" id="P00406"/>
    </source>
</evidence>
<evidence type="ECO:0000250" key="3">
    <source>
        <dbReference type="UniProtKB" id="P00410"/>
    </source>
</evidence>
<evidence type="ECO:0000250" key="4">
    <source>
        <dbReference type="UniProtKB" id="P68530"/>
    </source>
</evidence>
<evidence type="ECO:0000305" key="5"/>
<geneLocation type="mitochondrion"/>
<dbReference type="EC" id="7.1.1.9"/>
<dbReference type="EMBL" id="DQ019103">
    <property type="protein sequence ID" value="ABA28400.1"/>
    <property type="molecule type" value="Genomic_DNA"/>
</dbReference>
<dbReference type="SMR" id="Q38S00"/>
<dbReference type="GO" id="GO:0005743">
    <property type="term" value="C:mitochondrial inner membrane"/>
    <property type="evidence" value="ECO:0007669"/>
    <property type="project" value="UniProtKB-SubCell"/>
</dbReference>
<dbReference type="GO" id="GO:0045277">
    <property type="term" value="C:respiratory chain complex IV"/>
    <property type="evidence" value="ECO:0000250"/>
    <property type="project" value="UniProtKB"/>
</dbReference>
<dbReference type="GO" id="GO:0005507">
    <property type="term" value="F:copper ion binding"/>
    <property type="evidence" value="ECO:0007669"/>
    <property type="project" value="InterPro"/>
</dbReference>
<dbReference type="GO" id="GO:0004129">
    <property type="term" value="F:cytochrome-c oxidase activity"/>
    <property type="evidence" value="ECO:0007669"/>
    <property type="project" value="UniProtKB-EC"/>
</dbReference>
<dbReference type="GO" id="GO:0042773">
    <property type="term" value="P:ATP synthesis coupled electron transport"/>
    <property type="evidence" value="ECO:0007669"/>
    <property type="project" value="TreeGrafter"/>
</dbReference>
<dbReference type="CDD" id="cd13912">
    <property type="entry name" value="CcO_II_C"/>
    <property type="match status" value="1"/>
</dbReference>
<dbReference type="FunFam" id="1.10.287.90:FF:000001">
    <property type="entry name" value="Cytochrome c oxidase subunit 2"/>
    <property type="match status" value="1"/>
</dbReference>
<dbReference type="FunFam" id="2.60.40.420:FF:000001">
    <property type="entry name" value="Cytochrome c oxidase subunit 2"/>
    <property type="match status" value="1"/>
</dbReference>
<dbReference type="Gene3D" id="1.10.287.90">
    <property type="match status" value="1"/>
</dbReference>
<dbReference type="Gene3D" id="2.60.40.420">
    <property type="entry name" value="Cupredoxins - blue copper proteins"/>
    <property type="match status" value="1"/>
</dbReference>
<dbReference type="InterPro" id="IPR045187">
    <property type="entry name" value="CcO_II"/>
</dbReference>
<dbReference type="InterPro" id="IPR002429">
    <property type="entry name" value="CcO_II-like_C"/>
</dbReference>
<dbReference type="InterPro" id="IPR034210">
    <property type="entry name" value="CcO_II_C"/>
</dbReference>
<dbReference type="InterPro" id="IPR001505">
    <property type="entry name" value="Copper_CuA"/>
</dbReference>
<dbReference type="InterPro" id="IPR008972">
    <property type="entry name" value="Cupredoxin"/>
</dbReference>
<dbReference type="InterPro" id="IPR014222">
    <property type="entry name" value="Cyt_c_oxidase_su2"/>
</dbReference>
<dbReference type="InterPro" id="IPR011759">
    <property type="entry name" value="Cyt_c_oxidase_su2_TM_dom"/>
</dbReference>
<dbReference type="InterPro" id="IPR036257">
    <property type="entry name" value="Cyt_c_oxidase_su2_TM_sf"/>
</dbReference>
<dbReference type="NCBIfam" id="TIGR02866">
    <property type="entry name" value="CoxB"/>
    <property type="match status" value="1"/>
</dbReference>
<dbReference type="PANTHER" id="PTHR22888:SF9">
    <property type="entry name" value="CYTOCHROME C OXIDASE SUBUNIT 2"/>
    <property type="match status" value="1"/>
</dbReference>
<dbReference type="PANTHER" id="PTHR22888">
    <property type="entry name" value="CYTOCHROME C OXIDASE, SUBUNIT II"/>
    <property type="match status" value="1"/>
</dbReference>
<dbReference type="Pfam" id="PF00116">
    <property type="entry name" value="COX2"/>
    <property type="match status" value="1"/>
</dbReference>
<dbReference type="Pfam" id="PF02790">
    <property type="entry name" value="COX2_TM"/>
    <property type="match status" value="1"/>
</dbReference>
<dbReference type="PRINTS" id="PR01166">
    <property type="entry name" value="CYCOXIDASEII"/>
</dbReference>
<dbReference type="SUPFAM" id="SSF49503">
    <property type="entry name" value="Cupredoxins"/>
    <property type="match status" value="1"/>
</dbReference>
<dbReference type="SUPFAM" id="SSF81464">
    <property type="entry name" value="Cytochrome c oxidase subunit II-like, transmembrane region"/>
    <property type="match status" value="1"/>
</dbReference>
<dbReference type="PROSITE" id="PS00078">
    <property type="entry name" value="COX2"/>
    <property type="match status" value="1"/>
</dbReference>
<dbReference type="PROSITE" id="PS50857">
    <property type="entry name" value="COX2_CUA"/>
    <property type="match status" value="1"/>
</dbReference>
<dbReference type="PROSITE" id="PS50999">
    <property type="entry name" value="COX2_TM"/>
    <property type="match status" value="1"/>
</dbReference>
<feature type="chain" id="PRO_0000254927" description="Cytochrome c oxidase subunit 2">
    <location>
        <begin position="1"/>
        <end position="227"/>
    </location>
</feature>
<feature type="topological domain" description="Mitochondrial intermembrane" evidence="4">
    <location>
        <begin position="1"/>
        <end position="14"/>
    </location>
</feature>
<feature type="transmembrane region" description="Helical; Name=I" evidence="4">
    <location>
        <begin position="15"/>
        <end position="45"/>
    </location>
</feature>
<feature type="topological domain" description="Mitochondrial matrix" evidence="4">
    <location>
        <begin position="46"/>
        <end position="59"/>
    </location>
</feature>
<feature type="transmembrane region" description="Helical; Name=II" evidence="4">
    <location>
        <begin position="60"/>
        <end position="87"/>
    </location>
</feature>
<feature type="topological domain" description="Mitochondrial intermembrane" evidence="4">
    <location>
        <begin position="88"/>
        <end position="227"/>
    </location>
</feature>
<feature type="binding site" evidence="4">
    <location>
        <position position="161"/>
    </location>
    <ligand>
        <name>Cu cation</name>
        <dbReference type="ChEBI" id="CHEBI:23378"/>
        <label>A1</label>
    </ligand>
</feature>
<feature type="binding site" evidence="4">
    <location>
        <position position="196"/>
    </location>
    <ligand>
        <name>Cu cation</name>
        <dbReference type="ChEBI" id="CHEBI:23378"/>
        <label>A1</label>
    </ligand>
</feature>
<feature type="binding site" evidence="4">
    <location>
        <position position="196"/>
    </location>
    <ligand>
        <name>Cu cation</name>
        <dbReference type="ChEBI" id="CHEBI:23378"/>
        <label>A2</label>
    </ligand>
</feature>
<feature type="binding site" evidence="4">
    <location>
        <position position="198"/>
    </location>
    <ligand>
        <name>Cu cation</name>
        <dbReference type="ChEBI" id="CHEBI:23378"/>
        <label>A2</label>
    </ligand>
</feature>
<feature type="binding site" evidence="4">
    <location>
        <position position="198"/>
    </location>
    <ligand>
        <name>Mg(2+)</name>
        <dbReference type="ChEBI" id="CHEBI:18420"/>
        <note>ligand shared with MT-CO1</note>
    </ligand>
</feature>
<feature type="binding site" evidence="4">
    <location>
        <position position="200"/>
    </location>
    <ligand>
        <name>Cu cation</name>
        <dbReference type="ChEBI" id="CHEBI:23378"/>
        <label>A1</label>
    </ligand>
</feature>
<feature type="binding site" evidence="4">
    <location>
        <position position="200"/>
    </location>
    <ligand>
        <name>Cu cation</name>
        <dbReference type="ChEBI" id="CHEBI:23378"/>
        <label>A2</label>
    </ligand>
</feature>
<feature type="binding site" evidence="4">
    <location>
        <position position="204"/>
    </location>
    <ligand>
        <name>Cu cation</name>
        <dbReference type="ChEBI" id="CHEBI:23378"/>
        <label>A2</label>
    </ligand>
</feature>
<feature type="binding site" evidence="4">
    <location>
        <position position="207"/>
    </location>
    <ligand>
        <name>Cu cation</name>
        <dbReference type="ChEBI" id="CHEBI:23378"/>
        <label>A1</label>
    </ligand>
</feature>
<feature type="modified residue" description="Phosphotyrosine" evidence="2">
    <location>
        <position position="218"/>
    </location>
</feature>
<reference key="1">
    <citation type="journal article" date="2005" name="Mol. Phylogenet. Evol.">
        <title>Multigene phylogeny of the Old World mice, Murinae, reveals distinct geographic lineages and the declining utility of mitochondrial genes compared to nuclear genes.</title>
        <authorList>
            <person name="Steppan S.J."/>
            <person name="Adkins R.M."/>
            <person name="Spinks P.Q."/>
            <person name="Hale C."/>
        </authorList>
    </citation>
    <scope>NUCLEOTIDE SEQUENCE [GENOMIC DNA]</scope>
</reference>
<proteinExistence type="inferred from homology"/>
<protein>
    <recommendedName>
        <fullName>Cytochrome c oxidase subunit 2</fullName>
        <ecNumber>7.1.1.9</ecNumber>
    </recommendedName>
    <alternativeName>
        <fullName>Cytochrome c oxidase polypeptide II</fullName>
    </alternativeName>
</protein>
<comment type="function">
    <text evidence="3">Component of the cytochrome c oxidase, the last enzyme in the mitochondrial electron transport chain which drives oxidative phosphorylation. The respiratory chain contains 3 multisubunit complexes succinate dehydrogenase (complex II, CII), ubiquinol-cytochrome c oxidoreductase (cytochrome b-c1 complex, complex III, CIII) and cytochrome c oxidase (complex IV, CIV), that cooperate to transfer electrons derived from NADH and succinate to molecular oxygen, creating an electrochemical gradient over the inner membrane that drives transmembrane transport and the ATP synthase. Cytochrome c oxidase is the component of the respiratory chain that catalyzes the reduction of oxygen to water. Electrons originating from reduced cytochrome c in the intermembrane space (IMS) are transferred via the dinuclear copper A center (CU(A)) of subunit 2 and heme A of subunit 1 to the active site in subunit 1, a binuclear center (BNC) formed by heme A3 and copper B (CU(B)). The BNC reduces molecular oxygen to 2 water molecules using 4 electrons from cytochrome c in the IMS and 4 protons from the mitochondrial matrix.</text>
</comment>
<comment type="catalytic activity">
    <reaction evidence="3">
        <text>4 Fe(II)-[cytochrome c] + O2 + 8 H(+)(in) = 4 Fe(III)-[cytochrome c] + 2 H2O + 4 H(+)(out)</text>
        <dbReference type="Rhea" id="RHEA:11436"/>
        <dbReference type="Rhea" id="RHEA-COMP:10350"/>
        <dbReference type="Rhea" id="RHEA-COMP:14399"/>
        <dbReference type="ChEBI" id="CHEBI:15377"/>
        <dbReference type="ChEBI" id="CHEBI:15378"/>
        <dbReference type="ChEBI" id="CHEBI:15379"/>
        <dbReference type="ChEBI" id="CHEBI:29033"/>
        <dbReference type="ChEBI" id="CHEBI:29034"/>
        <dbReference type="EC" id="7.1.1.9"/>
    </reaction>
    <physiologicalReaction direction="left-to-right" evidence="3">
        <dbReference type="Rhea" id="RHEA:11437"/>
    </physiologicalReaction>
</comment>
<comment type="cofactor">
    <cofactor evidence="4">
        <name>Cu cation</name>
        <dbReference type="ChEBI" id="CHEBI:23378"/>
    </cofactor>
    <text evidence="4">Binds a dinuclear copper A center per subunit.</text>
</comment>
<comment type="subunit">
    <text evidence="1 4">Component of the cytochrome c oxidase (complex IV, CIV), a multisubunit enzyme composed of 14 subunits. The complex is composed of a catalytic core of 3 subunits MT-CO1, MT-CO2 and MT-CO3, encoded in the mitochondrial DNA, and 11 supernumerary subunits COX4I, COX5A, COX5B, COX6A, COX6B, COX6C, COX7A, COX7B, COX7C, COX8 and NDUFA4, which are encoded in the nuclear genome. The complex exists as a monomer or a dimer and forms supercomplexes (SCs) in the inner mitochondrial membrane with NADH-ubiquinone oxidoreductase (complex I, CI) and ubiquinol-cytochrome c oxidoreductase (cytochrome b-c1 complex, complex III, CIII), resulting in different assemblies (supercomplex SCI(1)III(2)IV(1) and megacomplex MCI(2)III(2)IV(2)) (By similarity). Found in a complex with TMEM177, COA6, COX18, COX20, SCO1 and SCO2. Interacts with TMEM177 in a COX20-dependent manner. Interacts with COX20. Interacts with COX16 (By similarity).</text>
</comment>
<comment type="subcellular location">
    <subcellularLocation>
        <location evidence="4">Mitochondrion inner membrane</location>
        <topology evidence="4">Multi-pass membrane protein</topology>
    </subcellularLocation>
</comment>
<comment type="similarity">
    <text evidence="5">Belongs to the cytochrome c oxidase subunit 2 family.</text>
</comment>